<sequence length="349" mass="38571">MGAQPEQTQKPSSRVQTLFKRVKAFFTKTGPPPPPPAPSRNLGCTHVYGYVFGHLGEREPEHSPSQQVLDTGEQLMVPVDVLEVDNEGALWKFLLSGAMAGAVSRTGTAPLDRAKVYMQVYSSKKNFMNLLGGLRSLIQEGGIRSLWRGNGINVLKIAPEYAIKFSVFEQCKNYFCGVHESPPFQERLLAGSLAVATSQTLINPMEVLKTRLTLRRTGQYKGLLDCARQILEQEGTRALYRGYLPNMLGIIPYACTDLAVYEMLNCLWLKSGRDMKDPSGLVSLSSVTLSTTCGQMASYPLTLVRTRMQAQGQLGPFSNLAYHDPLPLLSELSHDPPKHTQTDSQTLHI</sequence>
<name>S2541_BOVIN</name>
<accession>Q0II44</accession>
<protein>
    <recommendedName>
        <fullName evidence="3">Mitochondrial carrier protein SCaMC-3L</fullName>
    </recommendedName>
    <alternativeName>
        <fullName evidence="5">Mitochondrial ATP-Mg/Pi carrier protein SLC25A41</fullName>
    </alternativeName>
    <alternativeName>
        <fullName>Small calcium-binding mitochondrial carrier protein 3-like</fullName>
        <shortName evidence="2">SCaMC-3-like</shortName>
        <shortName evidence="2">SCaMC-3L</shortName>
    </alternativeName>
    <alternativeName>
        <fullName>Solute carrier family 25 member 41</fullName>
    </alternativeName>
</protein>
<feature type="chain" id="PRO_0000319989" description="Mitochondrial carrier protein SCaMC-3L">
    <location>
        <begin position="1"/>
        <end position="349"/>
    </location>
</feature>
<feature type="transmembrane region" description="Helical; Name=1" evidence="4">
    <location>
        <begin position="88"/>
        <end position="104"/>
    </location>
</feature>
<feature type="transmembrane region" description="Helical; Name=2" evidence="4">
    <location>
        <begin position="149"/>
        <end position="168"/>
    </location>
</feature>
<feature type="transmembrane region" description="Helical; Name=3" evidence="4">
    <location>
        <begin position="188"/>
        <end position="205"/>
    </location>
</feature>
<feature type="transmembrane region" description="Helical; Name=4" evidence="4">
    <location>
        <begin position="243"/>
        <end position="261"/>
    </location>
</feature>
<feature type="repeat" description="Solcar 1" evidence="4">
    <location>
        <begin position="88"/>
        <end position="174"/>
    </location>
</feature>
<feature type="repeat" description="Solcar 2" evidence="4">
    <location>
        <begin position="182"/>
        <end position="267"/>
    </location>
</feature>
<keyword id="KW-0472">Membrane</keyword>
<keyword id="KW-0496">Mitochondrion</keyword>
<keyword id="KW-0999">Mitochondrion inner membrane</keyword>
<keyword id="KW-1185">Reference proteome</keyword>
<keyword id="KW-0677">Repeat</keyword>
<keyword id="KW-0812">Transmembrane</keyword>
<keyword id="KW-1133">Transmembrane helix</keyword>
<keyword id="KW-0813">Transport</keyword>
<comment type="function">
    <text evidence="2">Calcium-independent ATP-Mg/Pi exchanger that catalyzes the electroneutral exchange of Mg-ATP or free ADP against an hydrogenphosphate and participates in the net transport of adenine nucleotides across the mitochondria inner membrane.</text>
</comment>
<comment type="catalytic activity">
    <reaction evidence="2">
        <text>Mg(2+)(out) + phosphate(in) + ATP(out) = Mg(2+)(in) + phosphate(out) + ATP(in)</text>
        <dbReference type="Rhea" id="RHEA:65840"/>
        <dbReference type="ChEBI" id="CHEBI:18420"/>
        <dbReference type="ChEBI" id="CHEBI:30616"/>
        <dbReference type="ChEBI" id="CHEBI:43474"/>
    </reaction>
</comment>
<comment type="catalytic activity">
    <reaction evidence="2">
        <text>ADP(out) + phosphate(in) + H(+)(out) = ADP(in) + phosphate(out) + H(+)(in)</text>
        <dbReference type="Rhea" id="RHEA:65844"/>
        <dbReference type="ChEBI" id="CHEBI:15378"/>
        <dbReference type="ChEBI" id="CHEBI:43474"/>
        <dbReference type="ChEBI" id="CHEBI:456216"/>
    </reaction>
</comment>
<comment type="subcellular location">
    <subcellularLocation>
        <location evidence="2">Mitochondrion inner membrane</location>
        <topology evidence="1">Multi-pass membrane protein</topology>
    </subcellularLocation>
</comment>
<comment type="similarity">
    <text evidence="5">Belongs to the mitochondrial carrier (TC 2.A.29) family.</text>
</comment>
<organism>
    <name type="scientific">Bos taurus</name>
    <name type="common">Bovine</name>
    <dbReference type="NCBI Taxonomy" id="9913"/>
    <lineage>
        <taxon>Eukaryota</taxon>
        <taxon>Metazoa</taxon>
        <taxon>Chordata</taxon>
        <taxon>Craniata</taxon>
        <taxon>Vertebrata</taxon>
        <taxon>Euteleostomi</taxon>
        <taxon>Mammalia</taxon>
        <taxon>Eutheria</taxon>
        <taxon>Laurasiatheria</taxon>
        <taxon>Artiodactyla</taxon>
        <taxon>Ruminantia</taxon>
        <taxon>Pecora</taxon>
        <taxon>Bovidae</taxon>
        <taxon>Bovinae</taxon>
        <taxon>Bos</taxon>
    </lineage>
</organism>
<dbReference type="EMBL" id="BC122815">
    <property type="protein sequence ID" value="AAI22816.1"/>
    <property type="molecule type" value="mRNA"/>
</dbReference>
<dbReference type="RefSeq" id="NP_001069309.1">
    <property type="nucleotide sequence ID" value="NM_001075841.3"/>
</dbReference>
<dbReference type="SMR" id="Q0II44"/>
<dbReference type="FunCoup" id="Q0II44">
    <property type="interactions" value="69"/>
</dbReference>
<dbReference type="STRING" id="9913.ENSBTAP00000035802"/>
<dbReference type="PaxDb" id="9913-ENSBTAP00000035802"/>
<dbReference type="Ensembl" id="ENSBTAT00000035936.4">
    <property type="protein sequence ID" value="ENSBTAP00000035802.3"/>
    <property type="gene ID" value="ENSBTAG00000020017.5"/>
</dbReference>
<dbReference type="GeneID" id="523430"/>
<dbReference type="KEGG" id="bta:523430"/>
<dbReference type="CTD" id="284427"/>
<dbReference type="VEuPathDB" id="HostDB:ENSBTAG00000020017"/>
<dbReference type="VGNC" id="VGNC:34766">
    <property type="gene designation" value="SLC25A41"/>
</dbReference>
<dbReference type="eggNOG" id="KOG0036">
    <property type="taxonomic scope" value="Eukaryota"/>
</dbReference>
<dbReference type="GeneTree" id="ENSGT00940000162419"/>
<dbReference type="HOGENOM" id="CLU_015166_10_2_1"/>
<dbReference type="InParanoid" id="Q0II44"/>
<dbReference type="OMA" id="ESPPFQE"/>
<dbReference type="OrthoDB" id="270584at2759"/>
<dbReference type="TreeFam" id="TF313492"/>
<dbReference type="Proteomes" id="UP000009136">
    <property type="component" value="Chromosome 7"/>
</dbReference>
<dbReference type="Bgee" id="ENSBTAG00000020017">
    <property type="expression patterns" value="Expressed in semen and 101 other cell types or tissues"/>
</dbReference>
<dbReference type="GO" id="GO:0005743">
    <property type="term" value="C:mitochondrial inner membrane"/>
    <property type="evidence" value="ECO:0007669"/>
    <property type="project" value="UniProtKB-SubCell"/>
</dbReference>
<dbReference type="GO" id="GO:0005739">
    <property type="term" value="C:mitochondrion"/>
    <property type="evidence" value="ECO:0000250"/>
    <property type="project" value="UniProtKB"/>
</dbReference>
<dbReference type="GO" id="GO:0015217">
    <property type="term" value="F:ADP transmembrane transporter activity"/>
    <property type="evidence" value="ECO:0000250"/>
    <property type="project" value="UniProtKB"/>
</dbReference>
<dbReference type="GO" id="GO:0005347">
    <property type="term" value="F:ATP transmembrane transporter activity"/>
    <property type="evidence" value="ECO:0000250"/>
    <property type="project" value="UniProtKB"/>
</dbReference>
<dbReference type="GO" id="GO:0015866">
    <property type="term" value="P:ADP transport"/>
    <property type="evidence" value="ECO:0000250"/>
    <property type="project" value="UniProtKB"/>
</dbReference>
<dbReference type="GO" id="GO:0015867">
    <property type="term" value="P:ATP transport"/>
    <property type="evidence" value="ECO:0000250"/>
    <property type="project" value="UniProtKB"/>
</dbReference>
<dbReference type="GO" id="GO:0140021">
    <property type="term" value="P:mitochondrial ADP transmembrane transport"/>
    <property type="evidence" value="ECO:0000250"/>
    <property type="project" value="UniProtKB"/>
</dbReference>
<dbReference type="GO" id="GO:1990544">
    <property type="term" value="P:mitochondrial ATP transmembrane transport"/>
    <property type="evidence" value="ECO:0000250"/>
    <property type="project" value="UniProtKB"/>
</dbReference>
<dbReference type="FunFam" id="1.50.40.10:FF:000003">
    <property type="entry name" value="Putative calcium-binding mitochondrial carrier protein scamc-2"/>
    <property type="match status" value="1"/>
</dbReference>
<dbReference type="Gene3D" id="1.50.40.10">
    <property type="entry name" value="Mitochondrial carrier domain"/>
    <property type="match status" value="1"/>
</dbReference>
<dbReference type="InterPro" id="IPR002067">
    <property type="entry name" value="Mit_carrier"/>
</dbReference>
<dbReference type="InterPro" id="IPR018108">
    <property type="entry name" value="Mitochondrial_sb/sol_carrier"/>
</dbReference>
<dbReference type="InterPro" id="IPR023395">
    <property type="entry name" value="Mt_carrier_dom_sf"/>
</dbReference>
<dbReference type="PANTHER" id="PTHR24089">
    <property type="entry name" value="SOLUTE CARRIER FAMILY 25"/>
    <property type="match status" value="1"/>
</dbReference>
<dbReference type="Pfam" id="PF00153">
    <property type="entry name" value="Mito_carr"/>
    <property type="match status" value="2"/>
</dbReference>
<dbReference type="PRINTS" id="PR00926">
    <property type="entry name" value="MITOCARRIER"/>
</dbReference>
<dbReference type="SUPFAM" id="SSF103506">
    <property type="entry name" value="Mitochondrial carrier"/>
    <property type="match status" value="1"/>
</dbReference>
<dbReference type="PROSITE" id="PS50920">
    <property type="entry name" value="SOLCAR"/>
    <property type="match status" value="2"/>
</dbReference>
<evidence type="ECO:0000250" key="1">
    <source>
        <dbReference type="UniProtKB" id="O94502"/>
    </source>
</evidence>
<evidence type="ECO:0000250" key="2">
    <source>
        <dbReference type="UniProtKB" id="Q8BVN7"/>
    </source>
</evidence>
<evidence type="ECO:0000250" key="3">
    <source>
        <dbReference type="UniProtKB" id="Q8N5S1"/>
    </source>
</evidence>
<evidence type="ECO:0000255" key="4"/>
<evidence type="ECO:0000305" key="5"/>
<evidence type="ECO:0000312" key="6">
    <source>
        <dbReference type="EMBL" id="AAI22816.1"/>
    </source>
</evidence>
<gene>
    <name evidence="3" type="primary">SLC25A41</name>
</gene>
<proteinExistence type="evidence at transcript level"/>
<reference evidence="6" key="1">
    <citation type="submission" date="2006-08" db="EMBL/GenBank/DDBJ databases">
        <authorList>
            <consortium name="NIH - Mammalian Gene Collection (MGC) project"/>
        </authorList>
    </citation>
    <scope>NUCLEOTIDE SEQUENCE [LARGE SCALE MRNA]</scope>
    <source>
        <strain evidence="6">Crossbred X Angus</strain>
        <tissue evidence="6">Liver</tissue>
    </source>
</reference>